<organism>
    <name type="scientific">Arabidopsis thaliana</name>
    <name type="common">Mouse-ear cress</name>
    <dbReference type="NCBI Taxonomy" id="3702"/>
    <lineage>
        <taxon>Eukaryota</taxon>
        <taxon>Viridiplantae</taxon>
        <taxon>Streptophyta</taxon>
        <taxon>Embryophyta</taxon>
        <taxon>Tracheophyta</taxon>
        <taxon>Spermatophyta</taxon>
        <taxon>Magnoliopsida</taxon>
        <taxon>eudicotyledons</taxon>
        <taxon>Gunneridae</taxon>
        <taxon>Pentapetalae</taxon>
        <taxon>rosids</taxon>
        <taxon>malvids</taxon>
        <taxon>Brassicales</taxon>
        <taxon>Brassicaceae</taxon>
        <taxon>Camelineae</taxon>
        <taxon>Arabidopsis</taxon>
    </lineage>
</organism>
<evidence type="ECO:0000250" key="1"/>
<evidence type="ECO:0000255" key="2"/>
<evidence type="ECO:0000255" key="3">
    <source>
        <dbReference type="PROSITE-ProRule" id="PRU00175"/>
    </source>
</evidence>
<evidence type="ECO:0000305" key="4"/>
<sequence>METKHLRKLLQLYQACGGEQELTKTVQNVTSSPLTPTPPPQPPSALDSTMALTIFILLVALFFMGFFSVYFRHFADSSSSTVDISSMPRTRSSRMSPRRLSTSVVVSRPYSFRRGLDSQAVRSLPVYRYTKAAKQRNEDCVICLSDFEEGETVKVIPHCGHVFHVDCVDTWLSSYVTCPLCRSNQLFSDKDLGMQEPPDQDSAEEHDTCDGVDTCVRRCSSCSSLGQRTGLERSLSL</sequence>
<protein>
    <recommendedName>
        <fullName>RING-H2 finger protein ATL57</fullName>
        <ecNumber evidence="4">2.3.2.27</ecNumber>
    </recommendedName>
    <alternativeName>
        <fullName evidence="4">RING-type E3 ubiquitin transferase ATL57</fullName>
    </alternativeName>
</protein>
<keyword id="KW-0472">Membrane</keyword>
<keyword id="KW-0479">Metal-binding</keyword>
<keyword id="KW-1185">Reference proteome</keyword>
<keyword id="KW-0808">Transferase</keyword>
<keyword id="KW-0812">Transmembrane</keyword>
<keyword id="KW-1133">Transmembrane helix</keyword>
<keyword id="KW-0833">Ubl conjugation pathway</keyword>
<keyword id="KW-0862">Zinc</keyword>
<keyword id="KW-0863">Zinc-finger</keyword>
<dbReference type="EC" id="2.3.2.27" evidence="4"/>
<dbReference type="EMBL" id="AC006929">
    <property type="protein sequence ID" value="AAD21508.1"/>
    <property type="molecule type" value="Genomic_DNA"/>
</dbReference>
<dbReference type="EMBL" id="CP002685">
    <property type="protein sequence ID" value="AEC08062.1"/>
    <property type="molecule type" value="Genomic_DNA"/>
</dbReference>
<dbReference type="EMBL" id="AK118539">
    <property type="protein sequence ID" value="BAC43142.1"/>
    <property type="molecule type" value="mRNA"/>
</dbReference>
<dbReference type="EMBL" id="BT005256">
    <property type="protein sequence ID" value="AAO63320.1"/>
    <property type="molecule type" value="mRNA"/>
</dbReference>
<dbReference type="PIR" id="G84678">
    <property type="entry name" value="G84678"/>
</dbReference>
<dbReference type="RefSeq" id="NP_180361.1">
    <property type="nucleotide sequence ID" value="NM_128353.2"/>
</dbReference>
<dbReference type="SMR" id="Q9SJJ7"/>
<dbReference type="BioGRID" id="2688">
    <property type="interactions" value="7"/>
</dbReference>
<dbReference type="IntAct" id="Q9SJJ7">
    <property type="interactions" value="7"/>
</dbReference>
<dbReference type="STRING" id="3702.Q9SJJ7"/>
<dbReference type="GlyGen" id="Q9SJJ7">
    <property type="glycosylation" value="1 site"/>
</dbReference>
<dbReference type="PaxDb" id="3702-AT2G27940.1"/>
<dbReference type="EnsemblPlants" id="AT2G27940.1">
    <property type="protein sequence ID" value="AT2G27940.1"/>
    <property type="gene ID" value="AT2G27940"/>
</dbReference>
<dbReference type="GeneID" id="817338"/>
<dbReference type="Gramene" id="AT2G27940.1">
    <property type="protein sequence ID" value="AT2G27940.1"/>
    <property type="gene ID" value="AT2G27940"/>
</dbReference>
<dbReference type="KEGG" id="ath:AT2G27940"/>
<dbReference type="Araport" id="AT2G27940"/>
<dbReference type="TAIR" id="AT2G27940">
    <property type="gene designation" value="ATL57"/>
</dbReference>
<dbReference type="eggNOG" id="KOG0800">
    <property type="taxonomic scope" value="Eukaryota"/>
</dbReference>
<dbReference type="HOGENOM" id="CLU_013137_15_7_1"/>
<dbReference type="InParanoid" id="Q9SJJ7"/>
<dbReference type="OMA" id="QQCLDTW"/>
<dbReference type="OrthoDB" id="8062037at2759"/>
<dbReference type="PhylomeDB" id="Q9SJJ7"/>
<dbReference type="UniPathway" id="UPA00143"/>
<dbReference type="PRO" id="PR:Q9SJJ7"/>
<dbReference type="Proteomes" id="UP000006548">
    <property type="component" value="Chromosome 2"/>
</dbReference>
<dbReference type="ExpressionAtlas" id="Q9SJJ7">
    <property type="expression patterns" value="baseline and differential"/>
</dbReference>
<dbReference type="GO" id="GO:0016020">
    <property type="term" value="C:membrane"/>
    <property type="evidence" value="ECO:0007669"/>
    <property type="project" value="UniProtKB-SubCell"/>
</dbReference>
<dbReference type="GO" id="GO:0016740">
    <property type="term" value="F:transferase activity"/>
    <property type="evidence" value="ECO:0007669"/>
    <property type="project" value="UniProtKB-KW"/>
</dbReference>
<dbReference type="GO" id="GO:0008270">
    <property type="term" value="F:zinc ion binding"/>
    <property type="evidence" value="ECO:0007669"/>
    <property type="project" value="UniProtKB-KW"/>
</dbReference>
<dbReference type="GO" id="GO:0016567">
    <property type="term" value="P:protein ubiquitination"/>
    <property type="evidence" value="ECO:0007669"/>
    <property type="project" value="UniProtKB-UniPathway"/>
</dbReference>
<dbReference type="CDD" id="cd16461">
    <property type="entry name" value="RING-H2_EL5-like"/>
    <property type="match status" value="1"/>
</dbReference>
<dbReference type="FunFam" id="3.30.40.10:FF:000187">
    <property type="entry name" value="E3 ubiquitin-protein ligase ATL6"/>
    <property type="match status" value="1"/>
</dbReference>
<dbReference type="Gene3D" id="3.30.40.10">
    <property type="entry name" value="Zinc/RING finger domain, C3HC4 (zinc finger)"/>
    <property type="match status" value="1"/>
</dbReference>
<dbReference type="InterPro" id="IPR044600">
    <property type="entry name" value="ATL1/ATL16-like"/>
</dbReference>
<dbReference type="InterPro" id="IPR001841">
    <property type="entry name" value="Znf_RING"/>
</dbReference>
<dbReference type="InterPro" id="IPR013083">
    <property type="entry name" value="Znf_RING/FYVE/PHD"/>
</dbReference>
<dbReference type="PANTHER" id="PTHR46913">
    <property type="entry name" value="RING-H2 FINGER PROTEIN ATL16"/>
    <property type="match status" value="1"/>
</dbReference>
<dbReference type="PANTHER" id="PTHR46913:SF1">
    <property type="entry name" value="RING-H2 FINGER PROTEIN ATL16"/>
    <property type="match status" value="1"/>
</dbReference>
<dbReference type="Pfam" id="PF13639">
    <property type="entry name" value="zf-RING_2"/>
    <property type="match status" value="1"/>
</dbReference>
<dbReference type="SMART" id="SM00184">
    <property type="entry name" value="RING"/>
    <property type="match status" value="1"/>
</dbReference>
<dbReference type="SUPFAM" id="SSF57850">
    <property type="entry name" value="RING/U-box"/>
    <property type="match status" value="1"/>
</dbReference>
<dbReference type="PROSITE" id="PS50089">
    <property type="entry name" value="ZF_RING_2"/>
    <property type="match status" value="1"/>
</dbReference>
<proteinExistence type="evidence at transcript level"/>
<comment type="catalytic activity">
    <reaction evidence="4">
        <text>S-ubiquitinyl-[E2 ubiquitin-conjugating enzyme]-L-cysteine + [acceptor protein]-L-lysine = [E2 ubiquitin-conjugating enzyme]-L-cysteine + N(6)-ubiquitinyl-[acceptor protein]-L-lysine.</text>
        <dbReference type="EC" id="2.3.2.27"/>
    </reaction>
</comment>
<comment type="pathway">
    <text>Protein modification; protein ubiquitination.</text>
</comment>
<comment type="subcellular location">
    <subcellularLocation>
        <location evidence="4">Membrane</location>
        <topology evidence="4">Single-pass membrane protein</topology>
    </subcellularLocation>
</comment>
<comment type="domain">
    <text evidence="1">The RING-type zinc finger domain mediates binding to an E2 ubiquitin-conjugating enzyme.</text>
</comment>
<comment type="similarity">
    <text evidence="4">Belongs to the RING-type zinc finger family. ATL subfamily.</text>
</comment>
<feature type="chain" id="PRO_0000055778" description="RING-H2 finger protein ATL57">
    <location>
        <begin position="1"/>
        <end position="237"/>
    </location>
</feature>
<feature type="transmembrane region" description="Helical" evidence="2">
    <location>
        <begin position="51"/>
        <end position="71"/>
    </location>
</feature>
<feature type="zinc finger region" description="RING-type; atypical" evidence="3">
    <location>
        <begin position="140"/>
        <end position="182"/>
    </location>
</feature>
<accession>Q9SJJ7</accession>
<reference key="1">
    <citation type="journal article" date="1999" name="Nature">
        <title>Sequence and analysis of chromosome 2 of the plant Arabidopsis thaliana.</title>
        <authorList>
            <person name="Lin X."/>
            <person name="Kaul S."/>
            <person name="Rounsley S.D."/>
            <person name="Shea T.P."/>
            <person name="Benito M.-I."/>
            <person name="Town C.D."/>
            <person name="Fujii C.Y."/>
            <person name="Mason T.M."/>
            <person name="Bowman C.L."/>
            <person name="Barnstead M.E."/>
            <person name="Feldblyum T.V."/>
            <person name="Buell C.R."/>
            <person name="Ketchum K.A."/>
            <person name="Lee J.J."/>
            <person name="Ronning C.M."/>
            <person name="Koo H.L."/>
            <person name="Moffat K.S."/>
            <person name="Cronin L.A."/>
            <person name="Shen M."/>
            <person name="Pai G."/>
            <person name="Van Aken S."/>
            <person name="Umayam L."/>
            <person name="Tallon L.J."/>
            <person name="Gill J.E."/>
            <person name="Adams M.D."/>
            <person name="Carrera A.J."/>
            <person name="Creasy T.H."/>
            <person name="Goodman H.M."/>
            <person name="Somerville C.R."/>
            <person name="Copenhaver G.P."/>
            <person name="Preuss D."/>
            <person name="Nierman W.C."/>
            <person name="White O."/>
            <person name="Eisen J.A."/>
            <person name="Salzberg S.L."/>
            <person name="Fraser C.M."/>
            <person name="Venter J.C."/>
        </authorList>
    </citation>
    <scope>NUCLEOTIDE SEQUENCE [LARGE SCALE GENOMIC DNA]</scope>
    <source>
        <strain>cv. Columbia</strain>
    </source>
</reference>
<reference key="2">
    <citation type="journal article" date="2017" name="Plant J.">
        <title>Araport11: a complete reannotation of the Arabidopsis thaliana reference genome.</title>
        <authorList>
            <person name="Cheng C.Y."/>
            <person name="Krishnakumar V."/>
            <person name="Chan A.P."/>
            <person name="Thibaud-Nissen F."/>
            <person name="Schobel S."/>
            <person name="Town C.D."/>
        </authorList>
    </citation>
    <scope>GENOME REANNOTATION</scope>
    <source>
        <strain>cv. Columbia</strain>
    </source>
</reference>
<reference key="3">
    <citation type="journal article" date="2002" name="Science">
        <title>Functional annotation of a full-length Arabidopsis cDNA collection.</title>
        <authorList>
            <person name="Seki M."/>
            <person name="Narusaka M."/>
            <person name="Kamiya A."/>
            <person name="Ishida J."/>
            <person name="Satou M."/>
            <person name="Sakurai T."/>
            <person name="Nakajima M."/>
            <person name="Enju A."/>
            <person name="Akiyama K."/>
            <person name="Oono Y."/>
            <person name="Muramatsu M."/>
            <person name="Hayashizaki Y."/>
            <person name="Kawai J."/>
            <person name="Carninci P."/>
            <person name="Itoh M."/>
            <person name="Ishii Y."/>
            <person name="Arakawa T."/>
            <person name="Shibata K."/>
            <person name="Shinagawa A."/>
            <person name="Shinozaki K."/>
        </authorList>
    </citation>
    <scope>NUCLEOTIDE SEQUENCE [LARGE SCALE MRNA]</scope>
    <source>
        <strain>cv. Columbia</strain>
    </source>
</reference>
<reference key="4">
    <citation type="journal article" date="2003" name="Science">
        <title>Empirical analysis of transcriptional activity in the Arabidopsis genome.</title>
        <authorList>
            <person name="Yamada K."/>
            <person name="Lim J."/>
            <person name="Dale J.M."/>
            <person name="Chen H."/>
            <person name="Shinn P."/>
            <person name="Palm C.J."/>
            <person name="Southwick A.M."/>
            <person name="Wu H.C."/>
            <person name="Kim C.J."/>
            <person name="Nguyen M."/>
            <person name="Pham P.K."/>
            <person name="Cheuk R.F."/>
            <person name="Karlin-Newmann G."/>
            <person name="Liu S.X."/>
            <person name="Lam B."/>
            <person name="Sakano H."/>
            <person name="Wu T."/>
            <person name="Yu G."/>
            <person name="Miranda M."/>
            <person name="Quach H.L."/>
            <person name="Tripp M."/>
            <person name="Chang C.H."/>
            <person name="Lee J.M."/>
            <person name="Toriumi M.J."/>
            <person name="Chan M.M."/>
            <person name="Tang C.C."/>
            <person name="Onodera C.S."/>
            <person name="Deng J.M."/>
            <person name="Akiyama K."/>
            <person name="Ansari Y."/>
            <person name="Arakawa T."/>
            <person name="Banh J."/>
            <person name="Banno F."/>
            <person name="Bowser L."/>
            <person name="Brooks S.Y."/>
            <person name="Carninci P."/>
            <person name="Chao Q."/>
            <person name="Choy N."/>
            <person name="Enju A."/>
            <person name="Goldsmith A.D."/>
            <person name="Gurjal M."/>
            <person name="Hansen N.F."/>
            <person name="Hayashizaki Y."/>
            <person name="Johnson-Hopson C."/>
            <person name="Hsuan V.W."/>
            <person name="Iida K."/>
            <person name="Karnes M."/>
            <person name="Khan S."/>
            <person name="Koesema E."/>
            <person name="Ishida J."/>
            <person name="Jiang P.X."/>
            <person name="Jones T."/>
            <person name="Kawai J."/>
            <person name="Kamiya A."/>
            <person name="Meyers C."/>
            <person name="Nakajima M."/>
            <person name="Narusaka M."/>
            <person name="Seki M."/>
            <person name="Sakurai T."/>
            <person name="Satou M."/>
            <person name="Tamse R."/>
            <person name="Vaysberg M."/>
            <person name="Wallender E.K."/>
            <person name="Wong C."/>
            <person name="Yamamura Y."/>
            <person name="Yuan S."/>
            <person name="Shinozaki K."/>
            <person name="Davis R.W."/>
            <person name="Theologis A."/>
            <person name="Ecker J.R."/>
        </authorList>
    </citation>
    <scope>NUCLEOTIDE SEQUENCE [LARGE SCALE MRNA]</scope>
    <source>
        <strain>cv. Columbia</strain>
    </source>
</reference>
<reference key="5">
    <citation type="journal article" date="2002" name="Genome Biol.">
        <title>Evaluation and classification of RING-finger domains encoded by the Arabidopsis genome.</title>
        <authorList>
            <person name="Kosarev P."/>
            <person name="Mayer K.F.X."/>
            <person name="Hardtke C.S."/>
        </authorList>
    </citation>
    <scope>GENE FAMILY ORGANIZATION</scope>
</reference>
<reference key="6">
    <citation type="journal article" date="2006" name="J. Mol. Evol.">
        <title>The ATL gene family from Arabidopsis thaliana and Oryza sativa comprises a large number of putative ubiquitin ligases of the RING-H2 type.</title>
        <authorList>
            <person name="Serrano M."/>
            <person name="Parra S."/>
            <person name="Alcaraz L.D."/>
            <person name="Guzman P."/>
        </authorList>
    </citation>
    <scope>NOMENCLATURE</scope>
    <scope>GENE FAMILY ORGANIZATION</scope>
</reference>
<name>ATL57_ARATH</name>
<gene>
    <name type="primary">ATL57</name>
    <name type="ordered locus">At2g27940</name>
    <name type="ORF">T1E2.14</name>
</gene>